<organism>
    <name type="scientific">Rattus norvegicus</name>
    <name type="common">Rat</name>
    <dbReference type="NCBI Taxonomy" id="10116"/>
    <lineage>
        <taxon>Eukaryota</taxon>
        <taxon>Metazoa</taxon>
        <taxon>Chordata</taxon>
        <taxon>Craniata</taxon>
        <taxon>Vertebrata</taxon>
        <taxon>Euteleostomi</taxon>
        <taxon>Mammalia</taxon>
        <taxon>Eutheria</taxon>
        <taxon>Euarchontoglires</taxon>
        <taxon>Glires</taxon>
        <taxon>Rodentia</taxon>
        <taxon>Myomorpha</taxon>
        <taxon>Muroidea</taxon>
        <taxon>Muridae</taxon>
        <taxon>Murinae</taxon>
        <taxon>Rattus</taxon>
    </lineage>
</organism>
<feature type="signal peptide" evidence="4">
    <location>
        <begin position="1"/>
        <end position="20"/>
    </location>
</feature>
<feature type="chain" id="PRO_0000445555" description="Latent-transforming growth factor beta-binding protein 1">
    <location>
        <begin position="21"/>
        <end position="1712"/>
    </location>
</feature>
<feature type="domain" description="EGF-like 1" evidence="5">
    <location>
        <begin position="181"/>
        <end position="213"/>
    </location>
</feature>
<feature type="domain" description="EGF-like 2" evidence="5">
    <location>
        <begin position="391"/>
        <end position="423"/>
    </location>
</feature>
<feature type="domain" description="TB 1" evidence="6">
    <location>
        <begin position="549"/>
        <end position="601"/>
    </location>
</feature>
<feature type="domain" description="EGF-like 3; calcium-binding" evidence="5">
    <location>
        <begin position="618"/>
        <end position="658"/>
    </location>
</feature>
<feature type="domain" description="TB 2" evidence="6">
    <location>
        <begin position="669"/>
        <end position="721"/>
    </location>
</feature>
<feature type="domain" description="EGF-like 4; calcium-binding" evidence="5">
    <location>
        <begin position="865"/>
        <end position="906"/>
    </location>
</feature>
<feature type="domain" description="EGF-like 5; calcium-binding" evidence="5">
    <location>
        <begin position="907"/>
        <end position="948"/>
    </location>
</feature>
<feature type="domain" description="EGF-like 6; calcium-binding" evidence="5">
    <location>
        <begin position="949"/>
        <end position="989"/>
    </location>
</feature>
<feature type="domain" description="EGF-like 7; calcium-binding" evidence="5">
    <location>
        <begin position="990"/>
        <end position="1029"/>
    </location>
</feature>
<feature type="domain" description="EGF-like 8; calcium-binding" evidence="5">
    <location>
        <begin position="1030"/>
        <end position="1070"/>
    </location>
</feature>
<feature type="domain" description="EGF-like 9; calcium-binding" evidence="5">
    <location>
        <begin position="1071"/>
        <end position="1111"/>
    </location>
</feature>
<feature type="domain" description="EGF-like 10; calcium-binding" evidence="5">
    <location>
        <begin position="1112"/>
        <end position="1152"/>
    </location>
</feature>
<feature type="domain" description="EGF-like 11; calcium-binding" evidence="5">
    <location>
        <begin position="1153"/>
        <end position="1193"/>
    </location>
</feature>
<feature type="domain" description="EGF-like 12; calcium-binding" evidence="5">
    <location>
        <begin position="1194"/>
        <end position="1235"/>
    </location>
</feature>
<feature type="domain" description="EGF-like 13; calcium-binding" evidence="5">
    <location>
        <begin position="1236"/>
        <end position="1277"/>
    </location>
</feature>
<feature type="domain" description="EGF-like 14; calcium-binding" evidence="5">
    <location>
        <begin position="1278"/>
        <end position="1320"/>
    </location>
</feature>
<feature type="domain" description="TB 3" evidence="6">
    <location>
        <begin position="1338"/>
        <end position="1392"/>
    </location>
</feature>
<feature type="domain" description="EGF-like 15; calcium-binding" evidence="5">
    <location>
        <begin position="1415"/>
        <end position="1457"/>
    </location>
</feature>
<feature type="domain" description="EGF-like 16; calcium-binding" evidence="5">
    <location>
        <begin position="1458"/>
        <end position="1498"/>
    </location>
</feature>
<feature type="domain" description="TB 4" evidence="6">
    <location>
        <begin position="1515"/>
        <end position="1568"/>
    </location>
</feature>
<feature type="domain" description="EGF-like 17" evidence="5">
    <location>
        <begin position="1612"/>
        <end position="1652"/>
    </location>
</feature>
<feature type="domain" description="EGF-like 18; calcium-binding" evidence="5">
    <location>
        <begin position="1653"/>
        <end position="1697"/>
    </location>
</feature>
<feature type="region of interest" description="Disordered" evidence="7">
    <location>
        <begin position="63"/>
        <end position="148"/>
    </location>
</feature>
<feature type="region of interest" description="Disordered" evidence="7">
    <location>
        <begin position="752"/>
        <end position="803"/>
    </location>
</feature>
<feature type="region of interest" description="8-Cys3 region" evidence="2">
    <location>
        <begin position="1335"/>
        <end position="1402"/>
    </location>
</feature>
<feature type="region of interest" description="C-terminal domain" evidence="2">
    <location>
        <begin position="1498"/>
        <end position="1712"/>
    </location>
</feature>
<feature type="compositionally biased region" description="Polar residues" evidence="7">
    <location>
        <begin position="136"/>
        <end position="147"/>
    </location>
</feature>
<feature type="site" description="Cleavage" evidence="4">
    <location>
        <begin position="736"/>
        <end position="737"/>
    </location>
</feature>
<feature type="site" description="Cleavage" evidence="4">
    <location>
        <begin position="1577"/>
        <end position="1578"/>
    </location>
</feature>
<feature type="modified residue" description="(3R)-3-hydroxyasparagine" evidence="2">
    <location>
        <position position="966"/>
    </location>
</feature>
<feature type="modified residue" description="(3R)-3-hydroxyasparagine" evidence="2">
    <location>
        <position position="1129"/>
    </location>
</feature>
<feature type="modified residue" description="Phosphoserine" evidence="2">
    <location>
        <position position="1405"/>
    </location>
</feature>
<feature type="modified residue" description="Phosphoserine" evidence="2">
    <location>
        <position position="1588"/>
    </location>
</feature>
<feature type="modified residue" description="Phosphoserine" evidence="3">
    <location>
        <position position="1607"/>
    </location>
</feature>
<feature type="glycosylation site" description="N-linked (GlcNAc...) asparagine" evidence="4">
    <location>
        <position position="339"/>
    </location>
</feature>
<feature type="glycosylation site" description="N-linked (GlcNAc...) asparagine" evidence="4">
    <location>
        <position position="370"/>
    </location>
</feature>
<feature type="glycosylation site" description="N-linked (GlcNAc...) asparagine" evidence="4">
    <location>
        <position position="416"/>
    </location>
</feature>
<feature type="glycosylation site" description="N-linked (GlcNAc...) asparagine" evidence="4">
    <location>
        <position position="612"/>
    </location>
</feature>
<feature type="glycosylation site" description="O-linked (Glc) serine" evidence="2">
    <location>
        <position position="639"/>
    </location>
</feature>
<feature type="glycosylation site" description="O-linked (GalNAc...) threonine" evidence="2">
    <location>
        <position position="761"/>
    </location>
</feature>
<feature type="glycosylation site" description="O-linked (GalNAc...) threonine" evidence="2">
    <location>
        <position position="793"/>
    </location>
</feature>
<feature type="glycosylation site" description="O-linked (Glc) serine" evidence="2">
    <location>
        <position position="929"/>
    </location>
</feature>
<feature type="glycosylation site" description="O-linked (Glc) serine" evidence="2">
    <location>
        <position position="1011"/>
    </location>
</feature>
<feature type="glycosylation site" description="N-linked (GlcNAc...) asparagine" evidence="4">
    <location>
        <position position="1042"/>
    </location>
</feature>
<feature type="glycosylation site" description="O-linked (Glc) serine" evidence="2">
    <location>
        <position position="1051"/>
    </location>
</feature>
<feature type="glycosylation site" description="O-linked (Glc) serine" evidence="2">
    <location>
        <position position="1133"/>
    </location>
</feature>
<feature type="glycosylation site" description="O-linked (Glc) serine" evidence="2">
    <location>
        <position position="1216"/>
    </location>
</feature>
<feature type="glycosylation site" description="N-linked (GlcNAc...) asparagine" evidence="4">
    <location>
        <position position="1242"/>
    </location>
</feature>
<feature type="glycosylation site" description="N-linked (GlcNAc...) asparagine" evidence="1">
    <location>
        <position position="1357"/>
    </location>
</feature>
<feature type="glycosylation site" description="O-linked (Glc) serine" evidence="2">
    <location>
        <position position="1479"/>
    </location>
</feature>
<feature type="glycosylation site" description="O-linked (Glc) serine" evidence="2">
    <location>
        <position position="1678"/>
    </location>
</feature>
<feature type="disulfide bond" evidence="5">
    <location>
        <begin position="185"/>
        <end position="195"/>
    </location>
</feature>
<feature type="disulfide bond" evidence="5">
    <location>
        <begin position="189"/>
        <end position="201"/>
    </location>
</feature>
<feature type="disulfide bond" evidence="5">
    <location>
        <begin position="203"/>
        <end position="212"/>
    </location>
</feature>
<feature type="disulfide bond" evidence="5">
    <location>
        <begin position="395"/>
        <end position="405"/>
    </location>
</feature>
<feature type="disulfide bond" evidence="5">
    <location>
        <begin position="399"/>
        <end position="411"/>
    </location>
</feature>
<feature type="disulfide bond" evidence="5">
    <location>
        <begin position="413"/>
        <end position="422"/>
    </location>
</feature>
<feature type="disulfide bond" evidence="6">
    <location>
        <begin position="551"/>
        <end position="573"/>
    </location>
</feature>
<feature type="disulfide bond" evidence="6">
    <location>
        <begin position="560"/>
        <end position="586"/>
    </location>
</feature>
<feature type="disulfide bond" evidence="6">
    <location>
        <begin position="574"/>
        <end position="589"/>
    </location>
</feature>
<feature type="disulfide bond" evidence="5">
    <location>
        <begin position="622"/>
        <end position="633"/>
    </location>
</feature>
<feature type="disulfide bond" evidence="5">
    <location>
        <begin position="628"/>
        <end position="642"/>
    </location>
</feature>
<feature type="disulfide bond" evidence="5">
    <location>
        <begin position="644"/>
        <end position="657"/>
    </location>
</feature>
<feature type="disulfide bond" evidence="6">
    <location>
        <begin position="671"/>
        <end position="694"/>
    </location>
</feature>
<feature type="disulfide bond" evidence="6">
    <location>
        <begin position="681"/>
        <end position="706"/>
    </location>
</feature>
<feature type="disulfide bond" evidence="6">
    <location>
        <begin position="695"/>
        <end position="709"/>
    </location>
</feature>
<feature type="disulfide bond" evidence="6">
    <location>
        <begin position="696"/>
        <end position="721"/>
    </location>
</feature>
<feature type="disulfide bond" evidence="5">
    <location>
        <begin position="869"/>
        <end position="881"/>
    </location>
</feature>
<feature type="disulfide bond" evidence="5">
    <location>
        <begin position="876"/>
        <end position="890"/>
    </location>
</feature>
<feature type="disulfide bond" evidence="5">
    <location>
        <begin position="892"/>
        <end position="905"/>
    </location>
</feature>
<feature type="disulfide bond" evidence="5">
    <location>
        <begin position="911"/>
        <end position="923"/>
    </location>
</feature>
<feature type="disulfide bond" evidence="5">
    <location>
        <begin position="918"/>
        <end position="932"/>
    </location>
</feature>
<feature type="disulfide bond" evidence="5">
    <location>
        <begin position="934"/>
        <end position="947"/>
    </location>
</feature>
<feature type="disulfide bond" evidence="5">
    <location>
        <begin position="953"/>
        <end position="964"/>
    </location>
</feature>
<feature type="disulfide bond" evidence="5">
    <location>
        <begin position="959"/>
        <end position="973"/>
    </location>
</feature>
<feature type="disulfide bond" evidence="5">
    <location>
        <begin position="976"/>
        <end position="988"/>
    </location>
</feature>
<feature type="disulfide bond" evidence="5">
    <location>
        <begin position="994"/>
        <end position="1005"/>
    </location>
</feature>
<feature type="disulfide bond" evidence="5">
    <location>
        <begin position="1000"/>
        <end position="1014"/>
    </location>
</feature>
<feature type="disulfide bond" evidence="5">
    <location>
        <begin position="1017"/>
        <end position="1028"/>
    </location>
</feature>
<feature type="disulfide bond" evidence="5">
    <location>
        <begin position="1034"/>
        <end position="1045"/>
    </location>
</feature>
<feature type="disulfide bond" evidence="5">
    <location>
        <begin position="1040"/>
        <end position="1054"/>
    </location>
</feature>
<feature type="disulfide bond" evidence="5">
    <location>
        <begin position="1056"/>
        <end position="1069"/>
    </location>
</feature>
<feature type="disulfide bond" evidence="5">
    <location>
        <begin position="1075"/>
        <end position="1086"/>
    </location>
</feature>
<feature type="disulfide bond" evidence="5">
    <location>
        <begin position="1081"/>
        <end position="1095"/>
    </location>
</feature>
<feature type="disulfide bond" evidence="5">
    <location>
        <begin position="1097"/>
        <end position="1110"/>
    </location>
</feature>
<feature type="disulfide bond" evidence="5">
    <location>
        <begin position="1116"/>
        <end position="1127"/>
    </location>
</feature>
<feature type="disulfide bond" evidence="5">
    <location>
        <begin position="1122"/>
        <end position="1136"/>
    </location>
</feature>
<feature type="disulfide bond" evidence="5">
    <location>
        <begin position="1138"/>
        <end position="1151"/>
    </location>
</feature>
<feature type="disulfide bond" evidence="5">
    <location>
        <begin position="1157"/>
        <end position="1169"/>
    </location>
</feature>
<feature type="disulfide bond" evidence="5">
    <location>
        <begin position="1164"/>
        <end position="1178"/>
    </location>
</feature>
<feature type="disulfide bond" evidence="5">
    <location>
        <begin position="1180"/>
        <end position="1192"/>
    </location>
</feature>
<feature type="disulfide bond" evidence="5">
    <location>
        <begin position="1198"/>
        <end position="1210"/>
    </location>
</feature>
<feature type="disulfide bond" evidence="5">
    <location>
        <begin position="1204"/>
        <end position="1219"/>
    </location>
</feature>
<feature type="disulfide bond" evidence="5">
    <location>
        <begin position="1221"/>
        <end position="1234"/>
    </location>
</feature>
<feature type="disulfide bond" evidence="5">
    <location>
        <begin position="1240"/>
        <end position="1252"/>
    </location>
</feature>
<feature type="disulfide bond" evidence="5">
    <location>
        <begin position="1246"/>
        <end position="1261"/>
    </location>
</feature>
<feature type="disulfide bond" evidence="5">
    <location>
        <begin position="1263"/>
        <end position="1276"/>
    </location>
</feature>
<feature type="disulfide bond" evidence="5">
    <location>
        <begin position="1282"/>
        <end position="1294"/>
    </location>
</feature>
<feature type="disulfide bond" evidence="5">
    <location>
        <begin position="1289"/>
        <end position="1303"/>
    </location>
</feature>
<feature type="disulfide bond" evidence="5">
    <location>
        <begin position="1305"/>
        <end position="1319"/>
    </location>
</feature>
<feature type="disulfide bond" evidence="6">
    <location>
        <begin position="1340"/>
        <end position="1363"/>
    </location>
</feature>
<feature type="disulfide bond" evidence="6">
    <location>
        <begin position="1350"/>
        <end position="1375"/>
    </location>
</feature>
<feature type="disulfide bond" description="Interchain (with C-33 in TGFB1); in linked form" evidence="2">
    <location>
        <position position="1350"/>
    </location>
</feature>
<feature type="disulfide bond" evidence="6">
    <location>
        <begin position="1364"/>
        <end position="1380"/>
    </location>
</feature>
<feature type="disulfide bond" evidence="6">
    <location>
        <begin position="1365"/>
        <end position="1392"/>
    </location>
</feature>
<feature type="disulfide bond" description="Interchain (with C-33 in TGFB1); in linked form" evidence="2">
    <location>
        <position position="1375"/>
    </location>
</feature>
<feature type="disulfide bond" evidence="5">
    <location>
        <begin position="1419"/>
        <end position="1432"/>
    </location>
</feature>
<feature type="disulfide bond" evidence="5">
    <location>
        <begin position="1427"/>
        <end position="1441"/>
    </location>
</feature>
<feature type="disulfide bond" evidence="5">
    <location>
        <begin position="1443"/>
        <end position="1456"/>
    </location>
</feature>
<feature type="disulfide bond" evidence="5">
    <location>
        <begin position="1462"/>
        <end position="1473"/>
    </location>
</feature>
<feature type="disulfide bond" evidence="5">
    <location>
        <begin position="1468"/>
        <end position="1482"/>
    </location>
</feature>
<feature type="disulfide bond" evidence="5">
    <location>
        <begin position="1484"/>
        <end position="1497"/>
    </location>
</feature>
<feature type="disulfide bond" evidence="6">
    <location>
        <begin position="1517"/>
        <end position="1541"/>
    </location>
</feature>
<feature type="disulfide bond" evidence="6">
    <location>
        <begin position="1527"/>
        <end position="1553"/>
    </location>
</feature>
<feature type="disulfide bond" evidence="6">
    <location>
        <begin position="1542"/>
        <end position="1556"/>
    </location>
</feature>
<feature type="disulfide bond" evidence="6">
    <location>
        <begin position="1543"/>
        <end position="1568"/>
    </location>
</feature>
<feature type="disulfide bond" evidence="5">
    <location>
        <begin position="1616"/>
        <end position="1627"/>
    </location>
</feature>
<feature type="disulfide bond" evidence="5">
    <location>
        <begin position="1622"/>
        <end position="1636"/>
    </location>
</feature>
<feature type="disulfide bond" evidence="5">
    <location>
        <begin position="1638"/>
        <end position="1651"/>
    </location>
</feature>
<feature type="disulfide bond" evidence="5">
    <location>
        <begin position="1657"/>
        <end position="1672"/>
    </location>
</feature>
<feature type="disulfide bond" evidence="5">
    <location>
        <begin position="1667"/>
        <end position="1681"/>
    </location>
</feature>
<feature type="disulfide bond" evidence="5">
    <location>
        <begin position="1683"/>
        <end position="1696"/>
    </location>
</feature>
<proteinExistence type="evidence at protein level"/>
<name>LTBP1_RAT</name>
<gene>
    <name type="primary">Ltbp1</name>
</gene>
<reference key="1">
    <citation type="journal article" date="1990" name="Proc. Natl. Acad. Sci. U.S.A.">
        <title>Molecular cloning of the large subunit of transforming growth factor type beta masking protein and expression of the mRNA in various rat tissues.</title>
        <authorList>
            <person name="Tsuji T."/>
            <person name="Okada F."/>
            <person name="Yamaguchi K."/>
            <person name="Nakamura T."/>
        </authorList>
    </citation>
    <scope>NUCLEOTIDE SEQUENCE [MRNA]</scope>
    <scope>PARTIAL PROTEIN SEQUENCE</scope>
</reference>
<reference key="2">
    <citation type="journal article" date="1995" name="J. Cell Biol.">
        <title>Dual role for the latent transforming growth factor-beta binding protein in storage of latent TGF-beta in the extracellular matrix and as a structural matrix protein.</title>
        <authorList>
            <person name="Dallas S.L."/>
            <person name="Miyazono K."/>
            <person name="Skerry T.M."/>
            <person name="Mundy G.R."/>
            <person name="Bonewald L.F."/>
        </authorList>
    </citation>
    <scope>FUNCTION</scope>
</reference>
<reference key="3">
    <citation type="journal article" date="1999" name="Cytokine Growth Factor Rev.">
        <title>Latent transforming growth factor-beta binding proteins (LTBPs) -- structural extracellular matrix proteins for targeting TGF-beta action.</title>
        <authorList>
            <person name="Saharinen J."/>
            <person name="Hyytiainen M."/>
            <person name="Taipale J."/>
            <person name="Keski-Oja J."/>
        </authorList>
    </citation>
    <scope>REVIEW</scope>
</reference>
<reference key="4">
    <citation type="journal article" date="2000" name="Biochem. J.">
        <title>The latent transforming growth factor beta binding protein (LTBP) family.</title>
        <authorList>
            <person name="Oklu R."/>
            <person name="Hesketh R."/>
        </authorList>
    </citation>
    <scope>REVIEW</scope>
</reference>
<reference key="5">
    <citation type="journal article" date="2012" name="Nat. Commun.">
        <title>Quantitative maps of protein phosphorylation sites across 14 different rat organs and tissues.</title>
        <authorList>
            <person name="Lundby A."/>
            <person name="Secher A."/>
            <person name="Lage K."/>
            <person name="Nordsborg N.B."/>
            <person name="Dmytriyev A."/>
            <person name="Lundby C."/>
            <person name="Olsen J.V."/>
        </authorList>
    </citation>
    <scope>IDENTIFICATION BY MASS SPECTROMETRY [LARGE SCALE ANALYSIS]</scope>
</reference>
<dbReference type="EMBL" id="M55431">
    <property type="protein sequence ID" value="AAA42235.1"/>
    <property type="molecule type" value="mRNA"/>
</dbReference>
<dbReference type="PIR" id="A38261">
    <property type="entry name" value="A38261"/>
</dbReference>
<dbReference type="RefSeq" id="NP_067598.1">
    <property type="nucleotide sequence ID" value="NM_021587.1"/>
</dbReference>
<dbReference type="FunCoup" id="Q00918">
    <property type="interactions" value="802"/>
</dbReference>
<dbReference type="IntAct" id="Q00918">
    <property type="interactions" value="1"/>
</dbReference>
<dbReference type="STRING" id="10116.ENSRNOP00000040099"/>
<dbReference type="CarbonylDB" id="Q00918"/>
<dbReference type="GlyCosmos" id="Q00918">
    <property type="glycosylation" value="15 sites, No reported glycans"/>
</dbReference>
<dbReference type="GlyGen" id="Q00918">
    <property type="glycosylation" value="16 sites"/>
</dbReference>
<dbReference type="iPTMnet" id="Q00918"/>
<dbReference type="PhosphoSitePlus" id="Q00918"/>
<dbReference type="PaxDb" id="10116-ENSRNOP00000040099"/>
<dbReference type="GeneID" id="59107"/>
<dbReference type="KEGG" id="rno:59107"/>
<dbReference type="UCSC" id="RGD:68379">
    <property type="organism name" value="rat"/>
</dbReference>
<dbReference type="AGR" id="RGD:68379"/>
<dbReference type="CTD" id="4052"/>
<dbReference type="RGD" id="68379">
    <property type="gene designation" value="Ltbp1"/>
</dbReference>
<dbReference type="eggNOG" id="KOG1217">
    <property type="taxonomic scope" value="Eukaryota"/>
</dbReference>
<dbReference type="InParanoid" id="Q00918"/>
<dbReference type="PhylomeDB" id="Q00918"/>
<dbReference type="Reactome" id="R-RNO-2129379">
    <property type="pathway name" value="Molecules associated with elastic fibres"/>
</dbReference>
<dbReference type="Reactome" id="R-RNO-2173789">
    <property type="pathway name" value="TGF-beta receptor signaling activates SMADs"/>
</dbReference>
<dbReference type="Reactome" id="R-RNO-381426">
    <property type="pathway name" value="Regulation of Insulin-like Growth Factor (IGF) transport and uptake by Insulin-like Growth Factor Binding Proteins (IGFBPs)"/>
</dbReference>
<dbReference type="Reactome" id="R-RNO-8957275">
    <property type="pathway name" value="Post-translational protein phosphorylation"/>
</dbReference>
<dbReference type="PRO" id="PR:Q00918"/>
<dbReference type="Proteomes" id="UP000002494">
    <property type="component" value="Unplaced"/>
</dbReference>
<dbReference type="GO" id="GO:0030425">
    <property type="term" value="C:dendrite"/>
    <property type="evidence" value="ECO:0000314"/>
    <property type="project" value="RGD"/>
</dbReference>
<dbReference type="GO" id="GO:0031012">
    <property type="term" value="C:extracellular matrix"/>
    <property type="evidence" value="ECO:0000266"/>
    <property type="project" value="RGD"/>
</dbReference>
<dbReference type="GO" id="GO:0005576">
    <property type="term" value="C:extracellular region"/>
    <property type="evidence" value="ECO:0007669"/>
    <property type="project" value="UniProtKB-SubCell"/>
</dbReference>
<dbReference type="GO" id="GO:0038045">
    <property type="term" value="C:large latent transforming growth factor-beta complex"/>
    <property type="evidence" value="ECO:0000314"/>
    <property type="project" value="RGD"/>
</dbReference>
<dbReference type="GO" id="GO:0001527">
    <property type="term" value="C:microfibril"/>
    <property type="evidence" value="ECO:0000250"/>
    <property type="project" value="UniProtKB"/>
</dbReference>
<dbReference type="GO" id="GO:0043025">
    <property type="term" value="C:neuronal cell body"/>
    <property type="evidence" value="ECO:0000314"/>
    <property type="project" value="RGD"/>
</dbReference>
<dbReference type="GO" id="GO:0048471">
    <property type="term" value="C:perinuclear region of cytoplasm"/>
    <property type="evidence" value="ECO:0000314"/>
    <property type="project" value="RGD"/>
</dbReference>
<dbReference type="GO" id="GO:0032991">
    <property type="term" value="C:protein-containing complex"/>
    <property type="evidence" value="ECO:0000266"/>
    <property type="project" value="RGD"/>
</dbReference>
<dbReference type="GO" id="GO:0005509">
    <property type="term" value="F:calcium ion binding"/>
    <property type="evidence" value="ECO:0007669"/>
    <property type="project" value="InterPro"/>
</dbReference>
<dbReference type="GO" id="GO:0050436">
    <property type="term" value="F:microfibril binding"/>
    <property type="evidence" value="ECO:0000266"/>
    <property type="project" value="RGD"/>
</dbReference>
<dbReference type="GO" id="GO:0060090">
    <property type="term" value="F:molecular adaptor activity"/>
    <property type="evidence" value="ECO:0000266"/>
    <property type="project" value="RGD"/>
</dbReference>
<dbReference type="GO" id="GO:0141069">
    <property type="term" value="F:receptor ligand inhibitor activity"/>
    <property type="evidence" value="ECO:0000250"/>
    <property type="project" value="UniProtKB"/>
</dbReference>
<dbReference type="GO" id="GO:0050431">
    <property type="term" value="F:transforming growth factor beta binding"/>
    <property type="evidence" value="ECO:0000266"/>
    <property type="project" value="RGD"/>
</dbReference>
<dbReference type="GO" id="GO:0035904">
    <property type="term" value="P:aorta development"/>
    <property type="evidence" value="ECO:0000266"/>
    <property type="project" value="RGD"/>
</dbReference>
<dbReference type="GO" id="GO:0071260">
    <property type="term" value="P:cellular response to mechanical stimulus"/>
    <property type="evidence" value="ECO:0000270"/>
    <property type="project" value="RGD"/>
</dbReference>
<dbReference type="GO" id="GO:0071374">
    <property type="term" value="P:cellular response to parathyroid hormone stimulus"/>
    <property type="evidence" value="ECO:0000270"/>
    <property type="project" value="RGD"/>
</dbReference>
<dbReference type="GO" id="GO:0036120">
    <property type="term" value="P:cellular response to platelet-derived growth factor stimulus"/>
    <property type="evidence" value="ECO:0000270"/>
    <property type="project" value="RGD"/>
</dbReference>
<dbReference type="GO" id="GO:0071305">
    <property type="term" value="P:cellular response to vitamin D"/>
    <property type="evidence" value="ECO:0000270"/>
    <property type="project" value="RGD"/>
</dbReference>
<dbReference type="GO" id="GO:0060976">
    <property type="term" value="P:coronary vasculature development"/>
    <property type="evidence" value="ECO:0000266"/>
    <property type="project" value="RGD"/>
</dbReference>
<dbReference type="GO" id="GO:0035592">
    <property type="term" value="P:establishment of protein localization to extracellular region"/>
    <property type="evidence" value="ECO:0000266"/>
    <property type="project" value="RGD"/>
</dbReference>
<dbReference type="GO" id="GO:0032967">
    <property type="term" value="P:positive regulation of collagen biosynthetic process"/>
    <property type="evidence" value="ECO:0000315"/>
    <property type="project" value="RGD"/>
</dbReference>
<dbReference type="GO" id="GO:0035583">
    <property type="term" value="P:sequestering of TGFbeta in extracellular matrix"/>
    <property type="evidence" value="ECO:0000250"/>
    <property type="project" value="UniProtKB"/>
</dbReference>
<dbReference type="GO" id="GO:0003281">
    <property type="term" value="P:ventricular septum development"/>
    <property type="evidence" value="ECO:0000266"/>
    <property type="project" value="RGD"/>
</dbReference>
<dbReference type="CDD" id="cd00054">
    <property type="entry name" value="EGF_CA"/>
    <property type="match status" value="12"/>
</dbReference>
<dbReference type="FunFam" id="2.10.25.10:FF:000005">
    <property type="entry name" value="Fibrillin 2"/>
    <property type="match status" value="1"/>
</dbReference>
<dbReference type="FunFam" id="2.10.25.10:FF:000198">
    <property type="entry name" value="latent-transforming growth factor beta-binding protein 1 isoform X1"/>
    <property type="match status" value="1"/>
</dbReference>
<dbReference type="FunFam" id="2.10.25.10:FF:000205">
    <property type="entry name" value="latent-transforming growth factor beta-binding protein 1 isoform X1"/>
    <property type="match status" value="1"/>
</dbReference>
<dbReference type="FunFam" id="3.90.290.10:FF:000004">
    <property type="entry name" value="latent-transforming growth factor beta-binding protein 1 isoform X1"/>
    <property type="match status" value="1"/>
</dbReference>
<dbReference type="FunFam" id="2.10.25.10:FF:000046">
    <property type="entry name" value="Latent-transforming growth factor beta-binding protein 1 isoform x2"/>
    <property type="match status" value="1"/>
</dbReference>
<dbReference type="FunFam" id="2.10.25.10:FF:000019">
    <property type="entry name" value="latent-transforming growth factor beta-binding protein 1 isoform X2"/>
    <property type="match status" value="4"/>
</dbReference>
<dbReference type="FunFam" id="3.90.290.10:FF:000012">
    <property type="entry name" value="latent-transforming growth factor beta-binding protein 1 isoform X2"/>
    <property type="match status" value="1"/>
</dbReference>
<dbReference type="FunFam" id="2.10.25.10:FF:000475">
    <property type="entry name" value="latent-transforming growth factor beta-binding protein 1 isoform X3"/>
    <property type="match status" value="1"/>
</dbReference>
<dbReference type="FunFam" id="2.10.25.10:FF:000515">
    <property type="entry name" value="latent-transforming growth factor beta-binding protein 1 isoform X6"/>
    <property type="match status" value="1"/>
</dbReference>
<dbReference type="FunFam" id="2.10.25.10:FF:000014">
    <property type="entry name" value="Latent-transforming growth factor beta-binding protein 3"/>
    <property type="match status" value="1"/>
</dbReference>
<dbReference type="FunFam" id="2.10.25.10:FF:000077">
    <property type="entry name" value="Latent-transforming growth factor beta-binding protein 3 isoform 1"/>
    <property type="match status" value="1"/>
</dbReference>
<dbReference type="FunFam" id="3.90.290.10:FF:000001">
    <property type="entry name" value="Latent-transforming growth factor beta-binding protein 3 isoform 1"/>
    <property type="match status" value="1"/>
</dbReference>
<dbReference type="FunFam" id="3.90.290.10:FF:000002">
    <property type="entry name" value="Latent-transforming growth factor beta-binding protein 3 isoform 1"/>
    <property type="match status" value="1"/>
</dbReference>
<dbReference type="FunFam" id="2.10.25.10:FF:000056">
    <property type="entry name" value="Latent-transforming growth factor beta-binding protein 3 isoform 2"/>
    <property type="match status" value="1"/>
</dbReference>
<dbReference type="FunFam" id="2.10.25.10:FF:000115">
    <property type="entry name" value="latent-transforming growth factor beta-binding protein 4 isoform X2"/>
    <property type="match status" value="1"/>
</dbReference>
<dbReference type="FunFam" id="2.10.25.10:FF:000273">
    <property type="entry name" value="Putative latent-transforming growth factor beta-binding protein 2"/>
    <property type="match status" value="1"/>
</dbReference>
<dbReference type="Gene3D" id="2.10.25.10">
    <property type="entry name" value="Laminin"/>
    <property type="match status" value="18"/>
</dbReference>
<dbReference type="Gene3D" id="3.90.290.10">
    <property type="entry name" value="TGF-beta binding (TB) domain"/>
    <property type="match status" value="4"/>
</dbReference>
<dbReference type="InterPro" id="IPR001881">
    <property type="entry name" value="EGF-like_Ca-bd_dom"/>
</dbReference>
<dbReference type="InterPro" id="IPR000742">
    <property type="entry name" value="EGF-like_dom"/>
</dbReference>
<dbReference type="InterPro" id="IPR000152">
    <property type="entry name" value="EGF-type_Asp/Asn_hydroxyl_site"/>
</dbReference>
<dbReference type="InterPro" id="IPR018097">
    <property type="entry name" value="EGF_Ca-bd_CS"/>
</dbReference>
<dbReference type="InterPro" id="IPR009030">
    <property type="entry name" value="Growth_fac_rcpt_cys_sf"/>
</dbReference>
<dbReference type="InterPro" id="IPR049883">
    <property type="entry name" value="NOTCH1_EGF-like"/>
</dbReference>
<dbReference type="InterPro" id="IPR017878">
    <property type="entry name" value="TB_dom"/>
</dbReference>
<dbReference type="InterPro" id="IPR036773">
    <property type="entry name" value="TB_dom_sf"/>
</dbReference>
<dbReference type="InterPro" id="IPR052080">
    <property type="entry name" value="vWF_C/EGF_Fibrillin"/>
</dbReference>
<dbReference type="PANTHER" id="PTHR47333:SF5">
    <property type="entry name" value="FIBRILLIN-3"/>
    <property type="match status" value="1"/>
</dbReference>
<dbReference type="PANTHER" id="PTHR47333">
    <property type="entry name" value="VON WILLEBRAND FACTOR C AND EGF DOMAIN-CONTAINING PROTEIN"/>
    <property type="match status" value="1"/>
</dbReference>
<dbReference type="Pfam" id="PF07645">
    <property type="entry name" value="EGF_CA"/>
    <property type="match status" value="15"/>
</dbReference>
<dbReference type="Pfam" id="PF00683">
    <property type="entry name" value="TB"/>
    <property type="match status" value="4"/>
</dbReference>
<dbReference type="PIRSF" id="PIRSF036312">
    <property type="entry name" value="Fibrillin"/>
    <property type="match status" value="1"/>
</dbReference>
<dbReference type="SMART" id="SM00181">
    <property type="entry name" value="EGF"/>
    <property type="match status" value="18"/>
</dbReference>
<dbReference type="SMART" id="SM00179">
    <property type="entry name" value="EGF_CA"/>
    <property type="match status" value="16"/>
</dbReference>
<dbReference type="SUPFAM" id="SSF57196">
    <property type="entry name" value="EGF/Laminin"/>
    <property type="match status" value="5"/>
</dbReference>
<dbReference type="SUPFAM" id="SSF57184">
    <property type="entry name" value="Growth factor receptor domain"/>
    <property type="match status" value="4"/>
</dbReference>
<dbReference type="SUPFAM" id="SSF57581">
    <property type="entry name" value="TB module/8-cys domain"/>
    <property type="match status" value="4"/>
</dbReference>
<dbReference type="PROSITE" id="PS00010">
    <property type="entry name" value="ASX_HYDROXYL"/>
    <property type="match status" value="13"/>
</dbReference>
<dbReference type="PROSITE" id="PS00022">
    <property type="entry name" value="EGF_1"/>
    <property type="match status" value="2"/>
</dbReference>
<dbReference type="PROSITE" id="PS01186">
    <property type="entry name" value="EGF_2"/>
    <property type="match status" value="10"/>
</dbReference>
<dbReference type="PROSITE" id="PS50026">
    <property type="entry name" value="EGF_3"/>
    <property type="match status" value="14"/>
</dbReference>
<dbReference type="PROSITE" id="PS01187">
    <property type="entry name" value="EGF_CA"/>
    <property type="match status" value="15"/>
</dbReference>
<dbReference type="PROSITE" id="PS51364">
    <property type="entry name" value="TB"/>
    <property type="match status" value="4"/>
</dbReference>
<protein>
    <recommendedName>
        <fullName>Latent-transforming growth factor beta-binding protein 1</fullName>
        <shortName>LTBP-1</shortName>
    </recommendedName>
    <alternativeName>
        <fullName>Transforming growth factor beta-1-binding protein 1</fullName>
        <shortName>TGF-beta-1-BP-1</shortName>
    </alternativeName>
    <alternativeName>
        <fullName>Transforming growth factor beta-1-masking protein large subunit</fullName>
    </alternativeName>
</protein>
<evidence type="ECO:0000250" key="1"/>
<evidence type="ECO:0000250" key="2">
    <source>
        <dbReference type="UniProtKB" id="Q14766"/>
    </source>
</evidence>
<evidence type="ECO:0000250" key="3">
    <source>
        <dbReference type="UniProtKB" id="Q8CG19"/>
    </source>
</evidence>
<evidence type="ECO:0000255" key="4"/>
<evidence type="ECO:0000255" key="5">
    <source>
        <dbReference type="PROSITE-ProRule" id="PRU00076"/>
    </source>
</evidence>
<evidence type="ECO:0000255" key="6">
    <source>
        <dbReference type="PROSITE-ProRule" id="PRU00697"/>
    </source>
</evidence>
<evidence type="ECO:0000256" key="7">
    <source>
        <dbReference type="SAM" id="MobiDB-lite"/>
    </source>
</evidence>
<evidence type="ECO:0000269" key="8">
    <source>
    </source>
</evidence>
<evidence type="ECO:0000305" key="9"/>
<accession>Q00918</accession>
<sequence length="1712" mass="186599">MAGAWLRWGLLLWAGLLAWSAHGRVRRITYVVRPGPGLPAGTLPLAGPPRTFNVALDARYSRSSTATSSRSLAGPPAERTRRTSQPGGAALPGLRSPLPPEPARPGAPSRQLHSKAGAQTAVTRFAKHGRQVVRSKVQQDTQSSGGSRLQVQQKQQLQGINVCGGQCCHGWSKAPGSQRCTKPSCVPPCQNGGMCLRPQFCVCKPGTKGKACEITAAQDTMSPVFGGQNPGSSWVPPEPAAKRTSTKKADTLPRVSPVAQMTLTLKPKPSMGLSQQIHSQVAPLSSQNVMIRHGQTQEYVLKPKYFPAPKVVSGEQSTEGSFSLRYGQEQGTAPFQVSNHTGRIKVVFTPSICKVTCTKGNCHNSCQKGNTTTLISENGHAADTLTATNFRVVICHLPCMNGGQCSSRDKCQCPPNFTGKLCQIPVLGASMPKLYQHAQQPGKALGSHVIHSTHTLPLTMTNQQGVKVKFPPNIVNIHVKHPPEASVQIHQVSRIDGPVGQRVKEVQPGQSQVSYQGLPVQKTQTVHSTYSHQQVIPHVYPVAAKTQLGRCFQETIGSQCGKALPGLSKQEDCCGTVGTSWGFNKCQKCPKKQSYHGYTQMMECLQGYKRVNNTFCQDINECQLQGVCPNGECLNTMGSYRCSCKMGFGPDPTFSSCVPDPPMISEEKGPCYRLVSPGRQCMHPLSVHLTKQICCCSVGKAWGPQCEKCPLPGTAAFKEICPGGMGYTVSGIHRRRPIHQHIGKEAVFVKPKNTQPVAKSTHPPPLPAKEEPVEALTSSREHGPGVAEPEVVTAPPEKEIPSLDQEKTRLEPGQPQLSPGVSTIHLHPQFPVVVEKTSPPVPVEVAPEGSTSSASQVIAPTQVTEINECTVNPDICGAGHCINLPVRYTCICYEGYKFSEQQRKCIDIDECAQAQHLCSQGRCENTEGSFLCICPAGFIASEEGSNCIDVDECLRPDVCRDGRCINTAGAFRCEYCDSGYRMSRRGHCEDIDECLTPSTCPEEQCVNSPGSYQCVPCTEGFRGWNGQCLDVDECLQPKVCTNGSCTNLEGSYMCSCHKGYSPTPDHRHCQDIDECQQGNLCMNGQCKNTDGSFRCTCGQGYQLSAAKDQCEDIDECEHRHLCSHGQCRNTEGSFQCLCNQGYRASVLGDHCEDINECLEDSSVCQGGDCINTAGSYDCTCPDGLQLNDNKGCQDINECAQPGLCAPHGECLNTQGSFHCVCEQGFSISADGRTCEDIDECVNNTVCDSHGFCDNTAGSFRCLCYQGFQAPQDGQGCVDVNECELLSGVCGEAFCENVEGSFLCVCADENQEYSPMTGQCRSRATEDSGVDRQPKEEKKECYYNLNDASLCDNVLAPNVTKQECCCTSGAGWGDNCEIFPCPVQGTAEFSEMCPRGKGFVPAGESSYETGGENYKDADECLLFGEEICKNGYCLNTQPGYECYCKEGTYYDPVKLQCFDMDECQDPNSCIDGQCVNTEGSYNCFCTHPMVLDASEKRCVQPTESNEQIEETDVYQDLCWEHLSEEYVCSRPLVGKQTTYTECCCLYGEAWGMQCALCPMKDSDDYAQLCNIPVTGRRRPYGRDALVDFSEQYGPETDPYFIQDRFLNSFEELQAEECGILNGCENGRCVRVQEGYTCDCFDGYHLDMAKMTCVDVNECSELNNRMSLCKNAKCINTEGSYKCVCLPGYVPSDKPNYCTPLNTALNLDKDSDLE</sequence>
<comment type="function">
    <text evidence="2 8">Key regulator of transforming growth factor beta (TGFB1, TGFB2 and TGFB3) that controls TGF-beta activation by maintaining it in a latent state during storage in extracellular space (PubMed:7593177). Associates specifically via disulfide bonds with the Latency-associated peptide (LAP), which is the regulatory chain of TGF-beta, and regulates integrin-dependent activation of TGF-beta (By similarity). Outcompeted by LRRC32/GARP for binding to LAP regulatory chain of TGF-beta (By similarity).</text>
</comment>
<comment type="subunit">
    <text evidence="2">Interacts with TGFB1; associates via disulfide bonds with the Latency-associated peptide chain (LAP) regulatory chain of TGFB1, leading to regulate activation of TGF-beta-1. LTBP1 does not bind directly to TGF-beta-1, the active chain of TGFB1. Interacts (via C-terminal domain) with FBN1 (via N-terminal domain). Interacts with FBN2. Interacts with ADAMTSL2. Interacts with EFEMP2 (By similarity).</text>
</comment>
<comment type="subcellular location">
    <subcellularLocation>
        <location evidence="2">Secreted</location>
    </subcellularLocation>
    <subcellularLocation>
        <location evidence="2">Secreted</location>
        <location evidence="2">Extracellular space</location>
        <location evidence="2">Extracellular matrix</location>
    </subcellularLocation>
</comment>
<comment type="domain">
    <text evidence="2">The 8-Cys3 region in the third TB domain mediates the interchain disulfide bond interaction with the Latency-associated peptide chain (LAP) regulatory chain of TGFB1.</text>
</comment>
<comment type="PTM">
    <text evidence="2">Contains hydroxylated asparagine residues.</text>
</comment>
<comment type="PTM">
    <text evidence="2">Two intrachain disulfide bonds from the TB3 domain are rearranged upon TGFB1 binding, and form interchain bonds with TGFB1 propeptide, anchoring it to the extracellular matrix.</text>
</comment>
<comment type="PTM">
    <text evidence="2">O-glycosylated on serine residues by POGLUT2 and POGLUT3.</text>
</comment>
<comment type="similarity">
    <text evidence="9">Belongs to the LTBP family.</text>
</comment>
<keyword id="KW-0165">Cleavage on pair of basic residues</keyword>
<keyword id="KW-0903">Direct protein sequencing</keyword>
<keyword id="KW-1015">Disulfide bond</keyword>
<keyword id="KW-0245">EGF-like domain</keyword>
<keyword id="KW-0272">Extracellular matrix</keyword>
<keyword id="KW-0325">Glycoprotein</keyword>
<keyword id="KW-0340">Growth factor binding</keyword>
<keyword id="KW-0379">Hydroxylation</keyword>
<keyword id="KW-0597">Phosphoprotein</keyword>
<keyword id="KW-1185">Reference proteome</keyword>
<keyword id="KW-0677">Repeat</keyword>
<keyword id="KW-0964">Secreted</keyword>
<keyword id="KW-0732">Signal</keyword>